<dbReference type="EMBL" id="CP000783">
    <property type="protein sequence ID" value="ABU76597.1"/>
    <property type="molecule type" value="Genomic_DNA"/>
</dbReference>
<dbReference type="SMR" id="A7MEF1"/>
<dbReference type="KEGG" id="esa:ESA_01337"/>
<dbReference type="HOGENOM" id="CLU_144160_0_0_6"/>
<dbReference type="Proteomes" id="UP000000260">
    <property type="component" value="Chromosome"/>
</dbReference>
<dbReference type="GO" id="GO:0005737">
    <property type="term" value="C:cytoplasm"/>
    <property type="evidence" value="ECO:0007669"/>
    <property type="project" value="UniProtKB-SubCell"/>
</dbReference>
<dbReference type="GO" id="GO:0003677">
    <property type="term" value="F:DNA binding"/>
    <property type="evidence" value="ECO:0007669"/>
    <property type="project" value="UniProtKB-UniRule"/>
</dbReference>
<dbReference type="GO" id="GO:0044780">
    <property type="term" value="P:bacterial-type flagellum assembly"/>
    <property type="evidence" value="ECO:0007669"/>
    <property type="project" value="InterPro"/>
</dbReference>
<dbReference type="GO" id="GO:0045893">
    <property type="term" value="P:positive regulation of DNA-templated transcription"/>
    <property type="evidence" value="ECO:0007669"/>
    <property type="project" value="InterPro"/>
</dbReference>
<dbReference type="GO" id="GO:1902208">
    <property type="term" value="P:regulation of bacterial-type flagellum assembly"/>
    <property type="evidence" value="ECO:0007669"/>
    <property type="project" value="UniProtKB-UniRule"/>
</dbReference>
<dbReference type="Gene3D" id="1.10.4000.10">
    <property type="entry name" value="Flagellar transcriptional activator FlhD"/>
    <property type="match status" value="1"/>
</dbReference>
<dbReference type="HAMAP" id="MF_00725">
    <property type="entry name" value="FlhD"/>
    <property type="match status" value="1"/>
</dbReference>
<dbReference type="InterPro" id="IPR023559">
    <property type="entry name" value="Flagellar_FlhD"/>
</dbReference>
<dbReference type="InterPro" id="IPR036194">
    <property type="entry name" value="FlhD_sf"/>
</dbReference>
<dbReference type="NCBIfam" id="NF002783">
    <property type="entry name" value="PRK02909.1-1"/>
    <property type="match status" value="1"/>
</dbReference>
<dbReference type="Pfam" id="PF05247">
    <property type="entry name" value="FlhD"/>
    <property type="match status" value="1"/>
</dbReference>
<dbReference type="SUPFAM" id="SSF63592">
    <property type="entry name" value="Flagellar transcriptional activator FlhD"/>
    <property type="match status" value="1"/>
</dbReference>
<keyword id="KW-0010">Activator</keyword>
<keyword id="KW-1005">Bacterial flagellum biogenesis</keyword>
<keyword id="KW-0963">Cytoplasm</keyword>
<keyword id="KW-1015">Disulfide bond</keyword>
<keyword id="KW-0238">DNA-binding</keyword>
<keyword id="KW-1185">Reference proteome</keyword>
<keyword id="KW-0804">Transcription</keyword>
<keyword id="KW-0805">Transcription regulation</keyword>
<organism>
    <name type="scientific">Cronobacter sakazakii (strain ATCC BAA-894)</name>
    <name type="common">Enterobacter sakazakii</name>
    <dbReference type="NCBI Taxonomy" id="290339"/>
    <lineage>
        <taxon>Bacteria</taxon>
        <taxon>Pseudomonadati</taxon>
        <taxon>Pseudomonadota</taxon>
        <taxon>Gammaproteobacteria</taxon>
        <taxon>Enterobacterales</taxon>
        <taxon>Enterobacteriaceae</taxon>
        <taxon>Cronobacter</taxon>
    </lineage>
</organism>
<reference key="1">
    <citation type="journal article" date="2010" name="PLoS ONE">
        <title>Genome sequence of Cronobacter sakazakii BAA-894 and comparative genomic hybridization analysis with other Cronobacter species.</title>
        <authorList>
            <person name="Kucerova E."/>
            <person name="Clifton S.W."/>
            <person name="Xia X.Q."/>
            <person name="Long F."/>
            <person name="Porwollik S."/>
            <person name="Fulton L."/>
            <person name="Fronick C."/>
            <person name="Minx P."/>
            <person name="Kyung K."/>
            <person name="Warren W."/>
            <person name="Fulton R."/>
            <person name="Feng D."/>
            <person name="Wollam A."/>
            <person name="Shah N."/>
            <person name="Bhonagiri V."/>
            <person name="Nash W.E."/>
            <person name="Hallsworth-Pepin K."/>
            <person name="Wilson R.K."/>
            <person name="McClelland M."/>
            <person name="Forsythe S.J."/>
        </authorList>
    </citation>
    <scope>NUCLEOTIDE SEQUENCE [LARGE SCALE GENOMIC DNA]</scope>
    <source>
        <strain>ATCC BAA-894</strain>
    </source>
</reference>
<name>FLHD_CROS8</name>
<feature type="chain" id="PRO_1000132688" description="Flagellar transcriptional regulator FlhD">
    <location>
        <begin position="1"/>
        <end position="119"/>
    </location>
</feature>
<feature type="disulfide bond" description="Interchain" evidence="1">
    <location>
        <position position="68"/>
    </location>
</feature>
<evidence type="ECO:0000255" key="1">
    <source>
        <dbReference type="HAMAP-Rule" id="MF_00725"/>
    </source>
</evidence>
<protein>
    <recommendedName>
        <fullName evidence="1">Flagellar transcriptional regulator FlhD</fullName>
    </recommendedName>
</protein>
<gene>
    <name evidence="1" type="primary">flhD</name>
    <name type="ordered locus">ESA_01337</name>
</gene>
<comment type="function">
    <text evidence="1">Functions in complex with FlhC as a master transcriptional regulator that regulates transcription of several flagellar and non-flagellar operons by binding to their promoter region. Activates expression of class 2 flagellar genes, including fliA, which is a flagellum-specific sigma factor that turns on the class 3 genes. Also regulates genes whose products function in a variety of physiological pathways.</text>
</comment>
<comment type="subunit">
    <text evidence="1">Homodimer; disulfide-linked. Forms a heterohexamer composed of two FlhC and four FlhD subunits. Each FlhC binds a FlhD dimer, forming a heterotrimer, and a hexamer assembles by dimerization of two heterotrimers.</text>
</comment>
<comment type="subcellular location">
    <subcellularLocation>
        <location evidence="1">Cytoplasm</location>
    </subcellularLocation>
</comment>
<comment type="domain">
    <text evidence="1">The C-terminal region contains a putative helix-turn-helix (HTH) motif, suggesting that this region may bind DNA.</text>
</comment>
<comment type="similarity">
    <text evidence="1">Belongs to the FlhD family.</text>
</comment>
<proteinExistence type="inferred from homology"/>
<accession>A7MEF1</accession>
<sequence>MGKMHTSELLKHIYDINLSYLLLAQRLISQDKASAMFRLGISEEMASTLGDLTLPQMVKLAETNQLVCQFRFQDHQSITRLTQESRVDDLQQIHTGILLSTRLLNEASGTEDVARKKRA</sequence>